<proteinExistence type="inferred from homology"/>
<name>COBT_SHEON</name>
<protein>
    <recommendedName>
        <fullName evidence="1">Nicotinate-nucleotide--dimethylbenzimidazole phosphoribosyltransferase</fullName>
        <shortName evidence="1">NN:DBI PRT</shortName>
        <ecNumber evidence="1">2.4.2.21</ecNumber>
    </recommendedName>
    <alternativeName>
        <fullName evidence="1">N(1)-alpha-phosphoribosyltransferase</fullName>
    </alternativeName>
</protein>
<accession>Q8EI18</accession>
<organism>
    <name type="scientific">Shewanella oneidensis (strain ATCC 700550 / JCM 31522 / CIP 106686 / LMG 19005 / NCIMB 14063 / MR-1)</name>
    <dbReference type="NCBI Taxonomy" id="211586"/>
    <lineage>
        <taxon>Bacteria</taxon>
        <taxon>Pseudomonadati</taxon>
        <taxon>Pseudomonadota</taxon>
        <taxon>Gammaproteobacteria</taxon>
        <taxon>Alteromonadales</taxon>
        <taxon>Shewanellaceae</taxon>
        <taxon>Shewanella</taxon>
    </lineage>
</organism>
<dbReference type="EC" id="2.4.2.21" evidence="1"/>
<dbReference type="EMBL" id="AE014299">
    <property type="protein sequence ID" value="AAN54108.1"/>
    <property type="molecule type" value="Genomic_DNA"/>
</dbReference>
<dbReference type="RefSeq" id="NP_716663.1">
    <property type="nucleotide sequence ID" value="NC_004347.2"/>
</dbReference>
<dbReference type="RefSeq" id="WP_011071294.1">
    <property type="nucleotide sequence ID" value="NC_004347.2"/>
</dbReference>
<dbReference type="SMR" id="Q8EI18"/>
<dbReference type="STRING" id="211586.SO_1035"/>
<dbReference type="PaxDb" id="211586-SO_1035"/>
<dbReference type="KEGG" id="son:SO_1035"/>
<dbReference type="PATRIC" id="fig|211586.12.peg.992"/>
<dbReference type="eggNOG" id="COG2038">
    <property type="taxonomic scope" value="Bacteria"/>
</dbReference>
<dbReference type="HOGENOM" id="CLU_002982_0_0_6"/>
<dbReference type="OrthoDB" id="9781491at2"/>
<dbReference type="PhylomeDB" id="Q8EI18"/>
<dbReference type="BioCyc" id="SONE211586:G1GMP-958-MONOMER"/>
<dbReference type="UniPathway" id="UPA00061">
    <property type="reaction ID" value="UER00516"/>
</dbReference>
<dbReference type="Proteomes" id="UP000008186">
    <property type="component" value="Chromosome"/>
</dbReference>
<dbReference type="GO" id="GO:0008939">
    <property type="term" value="F:nicotinate-nucleotide-dimethylbenzimidazole phosphoribosyltransferase activity"/>
    <property type="evidence" value="ECO:0007669"/>
    <property type="project" value="UniProtKB-UniRule"/>
</dbReference>
<dbReference type="GO" id="GO:0009236">
    <property type="term" value="P:cobalamin biosynthetic process"/>
    <property type="evidence" value="ECO:0007669"/>
    <property type="project" value="UniProtKB-KW"/>
</dbReference>
<dbReference type="CDD" id="cd02439">
    <property type="entry name" value="DMB-PRT_CobT"/>
    <property type="match status" value="1"/>
</dbReference>
<dbReference type="FunFam" id="3.40.50.10210:FF:000001">
    <property type="entry name" value="Nicotinate-nucleotide--dimethylbenzimidazole phosphoribosyltransferase"/>
    <property type="match status" value="1"/>
</dbReference>
<dbReference type="Gene3D" id="1.10.1610.10">
    <property type="match status" value="1"/>
</dbReference>
<dbReference type="Gene3D" id="3.40.50.10210">
    <property type="match status" value="1"/>
</dbReference>
<dbReference type="HAMAP" id="MF_00230">
    <property type="entry name" value="CobT"/>
    <property type="match status" value="1"/>
</dbReference>
<dbReference type="InterPro" id="IPR003200">
    <property type="entry name" value="Nict_dMeBzImd_PRibTrfase"/>
</dbReference>
<dbReference type="InterPro" id="IPR017846">
    <property type="entry name" value="Nict_dMeBzImd_PRibTrfase_bact"/>
</dbReference>
<dbReference type="InterPro" id="IPR023195">
    <property type="entry name" value="Nict_dMeBzImd_PRibTrfase_N"/>
</dbReference>
<dbReference type="InterPro" id="IPR036087">
    <property type="entry name" value="Nict_dMeBzImd_PRibTrfase_sf"/>
</dbReference>
<dbReference type="NCBIfam" id="TIGR03160">
    <property type="entry name" value="cobT_DBIPRT"/>
    <property type="match status" value="1"/>
</dbReference>
<dbReference type="NCBIfam" id="NF000996">
    <property type="entry name" value="PRK00105.1"/>
    <property type="match status" value="1"/>
</dbReference>
<dbReference type="PANTHER" id="PTHR43463">
    <property type="entry name" value="NICOTINATE-NUCLEOTIDE--DIMETHYLBENZIMIDAZOLE PHOSPHORIBOSYLTRANSFERASE"/>
    <property type="match status" value="1"/>
</dbReference>
<dbReference type="PANTHER" id="PTHR43463:SF1">
    <property type="entry name" value="NICOTINATE-NUCLEOTIDE--DIMETHYLBENZIMIDAZOLE PHOSPHORIBOSYLTRANSFERASE"/>
    <property type="match status" value="1"/>
</dbReference>
<dbReference type="Pfam" id="PF02277">
    <property type="entry name" value="DBI_PRT"/>
    <property type="match status" value="1"/>
</dbReference>
<dbReference type="SUPFAM" id="SSF52733">
    <property type="entry name" value="Nicotinate mononucleotide:5,6-dimethylbenzimidazole phosphoribosyltransferase (CobT)"/>
    <property type="match status" value="1"/>
</dbReference>
<evidence type="ECO:0000255" key="1">
    <source>
        <dbReference type="HAMAP-Rule" id="MF_00230"/>
    </source>
</evidence>
<gene>
    <name evidence="1" type="primary">cobT</name>
    <name type="ordered locus">SO_1035</name>
</gene>
<feature type="chain" id="PRO_0000167070" description="Nicotinate-nucleotide--dimethylbenzimidazole phosphoribosyltransferase">
    <location>
        <begin position="1"/>
        <end position="350"/>
    </location>
</feature>
<feature type="active site" description="Proton acceptor" evidence="1">
    <location>
        <position position="317"/>
    </location>
</feature>
<sequence>MSQSSLSFQIEPVSKAQDQVIQQKIDLKTKPPGALGMLESLALQIARIQGPQQLQIVKPTMLVFAGDHGIAAEGVSIAPSEVTHQMVQNFAEGGAAINVFCRQLGLTLEVIDCGILTPVEGVEGIIDQRLGAGTGAIHLEPAMSLDCVDKGFAMARELIERHHQAGCNLVAFGEMGIGNTSSAAAIMAAIMQLEVADCVGRGTGINSETLARKLTLVELALLSHQSAMTGPKQVLACLGGFEIVQMTGAMLAAAERKMLVVVDGFIATAAALVAVTINANVRDYLIFAHRSEEQGHQRMLEHLQAKPLLSLGLRLGEGTGAALALPLIQAAANFYNQMASFSDAGIEAVV</sequence>
<comment type="function">
    <text evidence="1">Catalyzes the synthesis of alpha-ribazole-5'-phosphate from nicotinate mononucleotide (NAMN) and 5,6-dimethylbenzimidazole (DMB).</text>
</comment>
<comment type="catalytic activity">
    <reaction evidence="1">
        <text>5,6-dimethylbenzimidazole + nicotinate beta-D-ribonucleotide = alpha-ribazole 5'-phosphate + nicotinate + H(+)</text>
        <dbReference type="Rhea" id="RHEA:11196"/>
        <dbReference type="ChEBI" id="CHEBI:15378"/>
        <dbReference type="ChEBI" id="CHEBI:15890"/>
        <dbReference type="ChEBI" id="CHEBI:32544"/>
        <dbReference type="ChEBI" id="CHEBI:57502"/>
        <dbReference type="ChEBI" id="CHEBI:57918"/>
        <dbReference type="EC" id="2.4.2.21"/>
    </reaction>
</comment>
<comment type="pathway">
    <text evidence="1">Nucleoside biosynthesis; alpha-ribazole biosynthesis; alpha-ribazole from 5,6-dimethylbenzimidazole: step 1/2.</text>
</comment>
<comment type="similarity">
    <text evidence="1">Belongs to the CobT family.</text>
</comment>
<keyword id="KW-0169">Cobalamin biosynthesis</keyword>
<keyword id="KW-0328">Glycosyltransferase</keyword>
<keyword id="KW-1185">Reference proteome</keyword>
<keyword id="KW-0808">Transferase</keyword>
<reference key="1">
    <citation type="journal article" date="2002" name="Nat. Biotechnol.">
        <title>Genome sequence of the dissimilatory metal ion-reducing bacterium Shewanella oneidensis.</title>
        <authorList>
            <person name="Heidelberg J.F."/>
            <person name="Paulsen I.T."/>
            <person name="Nelson K.E."/>
            <person name="Gaidos E.J."/>
            <person name="Nelson W.C."/>
            <person name="Read T.D."/>
            <person name="Eisen J.A."/>
            <person name="Seshadri R."/>
            <person name="Ward N.L."/>
            <person name="Methe B.A."/>
            <person name="Clayton R.A."/>
            <person name="Meyer T."/>
            <person name="Tsapin A."/>
            <person name="Scott J."/>
            <person name="Beanan M.J."/>
            <person name="Brinkac L.M."/>
            <person name="Daugherty S.C."/>
            <person name="DeBoy R.T."/>
            <person name="Dodson R.J."/>
            <person name="Durkin A.S."/>
            <person name="Haft D.H."/>
            <person name="Kolonay J.F."/>
            <person name="Madupu R."/>
            <person name="Peterson J.D."/>
            <person name="Umayam L.A."/>
            <person name="White O."/>
            <person name="Wolf A.M."/>
            <person name="Vamathevan J.J."/>
            <person name="Weidman J.F."/>
            <person name="Impraim M."/>
            <person name="Lee K."/>
            <person name="Berry K.J."/>
            <person name="Lee C."/>
            <person name="Mueller J."/>
            <person name="Khouri H.M."/>
            <person name="Gill J."/>
            <person name="Utterback T.R."/>
            <person name="McDonald L.A."/>
            <person name="Feldblyum T.V."/>
            <person name="Smith H.O."/>
            <person name="Venter J.C."/>
            <person name="Nealson K.H."/>
            <person name="Fraser C.M."/>
        </authorList>
    </citation>
    <scope>NUCLEOTIDE SEQUENCE [LARGE SCALE GENOMIC DNA]</scope>
    <source>
        <strain>ATCC 700550 / JCM 31522 / CIP 106686 / LMG 19005 / NCIMB 14063 / MR-1</strain>
    </source>
</reference>